<gene>
    <name type="primary">RpL18A</name>
    <name type="ORF">CG6510</name>
</gene>
<evidence type="ECO:0000305" key="1"/>
<comment type="similarity">
    <text evidence="1">Belongs to the eukaryotic ribosomal protein eL20 family.</text>
</comment>
<feature type="chain" id="PRO_0000213932" description="Large ribosomal subunit protein eL20">
    <location>
        <begin position="1"/>
        <end position="177"/>
    </location>
</feature>
<name>RL18A_DROME</name>
<accession>P41093</accession>
<accession>Q9V840</accession>
<dbReference type="EMBL" id="X75339">
    <property type="protein sequence ID" value="CAA53089.1"/>
    <property type="molecule type" value="mRNA"/>
</dbReference>
<dbReference type="EMBL" id="AE013599">
    <property type="protein sequence ID" value="AAF57838.1"/>
    <property type="molecule type" value="Genomic_DNA"/>
</dbReference>
<dbReference type="EMBL" id="AY071222">
    <property type="protein sequence ID" value="AAL48844.1"/>
    <property type="molecule type" value="mRNA"/>
</dbReference>
<dbReference type="PIR" id="S45364">
    <property type="entry name" value="S45364"/>
</dbReference>
<dbReference type="RefSeq" id="NP_523774.1">
    <property type="nucleotide sequence ID" value="NM_079050.3"/>
</dbReference>
<dbReference type="PDB" id="4V6W">
    <property type="method" value="EM"/>
    <property type="resolution" value="6.00 A"/>
    <property type="chains" value="CS=1-177"/>
</dbReference>
<dbReference type="PDB" id="6XU6">
    <property type="method" value="EM"/>
    <property type="resolution" value="3.50 A"/>
    <property type="chains" value="CS=5-177"/>
</dbReference>
<dbReference type="PDB" id="6XU7">
    <property type="method" value="EM"/>
    <property type="resolution" value="4.90 A"/>
    <property type="chains" value="CS=5-177"/>
</dbReference>
<dbReference type="PDB" id="6XU8">
    <property type="method" value="EM"/>
    <property type="resolution" value="3.00 A"/>
    <property type="chains" value="CS=5-177"/>
</dbReference>
<dbReference type="PDBsum" id="4V6W"/>
<dbReference type="PDBsum" id="6XU6"/>
<dbReference type="PDBsum" id="6XU7"/>
<dbReference type="PDBsum" id="6XU8"/>
<dbReference type="EMDB" id="EMD-10622"/>
<dbReference type="EMDB" id="EMD-10623"/>
<dbReference type="EMDB" id="EMD-10624"/>
<dbReference type="SMR" id="P41093"/>
<dbReference type="BioGRID" id="62674">
    <property type="interactions" value="114"/>
</dbReference>
<dbReference type="DIP" id="DIP-19043N"/>
<dbReference type="FunCoup" id="P41093">
    <property type="interactions" value="1097"/>
</dbReference>
<dbReference type="IntAct" id="P41093">
    <property type="interactions" value="9"/>
</dbReference>
<dbReference type="MINT" id="P41093"/>
<dbReference type="STRING" id="7227.FBpp0086103"/>
<dbReference type="PaxDb" id="7227-FBpp0086103"/>
<dbReference type="DNASU" id="36985"/>
<dbReference type="EnsemblMetazoa" id="FBtr0086947">
    <property type="protein sequence ID" value="FBpp0086103"/>
    <property type="gene ID" value="FBgn0010409"/>
</dbReference>
<dbReference type="GeneID" id="36985"/>
<dbReference type="KEGG" id="dme:Dmel_CG6510"/>
<dbReference type="AGR" id="FB:FBgn0010409"/>
<dbReference type="CTD" id="6142"/>
<dbReference type="FlyBase" id="FBgn0010409">
    <property type="gene designation" value="RpL18A"/>
</dbReference>
<dbReference type="VEuPathDB" id="VectorBase:FBgn0010409"/>
<dbReference type="eggNOG" id="KOG0829">
    <property type="taxonomic scope" value="Eukaryota"/>
</dbReference>
<dbReference type="GeneTree" id="ENSGT00390000015797"/>
<dbReference type="HOGENOM" id="CLU_080773_2_0_1"/>
<dbReference type="InParanoid" id="P41093"/>
<dbReference type="OMA" id="CIFAKND"/>
<dbReference type="OrthoDB" id="1294322at2759"/>
<dbReference type="PhylomeDB" id="P41093"/>
<dbReference type="Reactome" id="R-DME-156827">
    <property type="pathway name" value="L13a-mediated translational silencing of Ceruloplasmin expression"/>
</dbReference>
<dbReference type="Reactome" id="R-DME-1799339">
    <property type="pathway name" value="SRP-dependent cotranslational protein targeting to membrane"/>
</dbReference>
<dbReference type="Reactome" id="R-DME-72689">
    <property type="pathway name" value="Formation of a pool of free 40S subunits"/>
</dbReference>
<dbReference type="Reactome" id="R-DME-72706">
    <property type="pathway name" value="GTP hydrolysis and joining of the 60S ribosomal subunit"/>
</dbReference>
<dbReference type="Reactome" id="R-DME-975956">
    <property type="pathway name" value="Nonsense Mediated Decay (NMD) independent of the Exon Junction Complex (EJC)"/>
</dbReference>
<dbReference type="Reactome" id="R-DME-975957">
    <property type="pathway name" value="Nonsense Mediated Decay (NMD) enhanced by the Exon Junction Complex (EJC)"/>
</dbReference>
<dbReference type="SignaLink" id="P41093"/>
<dbReference type="BioGRID-ORCS" id="36985">
    <property type="hits" value="0 hits in 1 CRISPR screen"/>
</dbReference>
<dbReference type="ChiTaRS" id="RpL18A">
    <property type="organism name" value="fly"/>
</dbReference>
<dbReference type="GenomeRNAi" id="36985"/>
<dbReference type="PRO" id="PR:P41093"/>
<dbReference type="Proteomes" id="UP000000803">
    <property type="component" value="Chromosome 2R"/>
</dbReference>
<dbReference type="Bgee" id="FBgn0010409">
    <property type="expression patterns" value="Expressed in egg cell and 291 other cell types or tissues"/>
</dbReference>
<dbReference type="GO" id="GO:0022625">
    <property type="term" value="C:cytosolic large ribosomal subunit"/>
    <property type="evidence" value="ECO:0000318"/>
    <property type="project" value="GO_Central"/>
</dbReference>
<dbReference type="GO" id="GO:0022626">
    <property type="term" value="C:cytosolic ribosome"/>
    <property type="evidence" value="ECO:0000314"/>
    <property type="project" value="FlyBase"/>
</dbReference>
<dbReference type="GO" id="GO:0003735">
    <property type="term" value="F:structural constituent of ribosome"/>
    <property type="evidence" value="ECO:0000314"/>
    <property type="project" value="FlyBase"/>
</dbReference>
<dbReference type="GO" id="GO:0002181">
    <property type="term" value="P:cytoplasmic translation"/>
    <property type="evidence" value="ECO:0000318"/>
    <property type="project" value="GO_Central"/>
</dbReference>
<dbReference type="FunFam" id="3.10.20.10:FF:000001">
    <property type="entry name" value="60S ribosomal protein L18a"/>
    <property type="match status" value="1"/>
</dbReference>
<dbReference type="FunFam" id="3.10.20.10:FF:000002">
    <property type="entry name" value="60S ribosomal protein L18a"/>
    <property type="match status" value="1"/>
</dbReference>
<dbReference type="Gene3D" id="3.10.20.10">
    <property type="match status" value="2"/>
</dbReference>
<dbReference type="HAMAP" id="MF_00273">
    <property type="entry name" value="Ribosomal_eL20"/>
    <property type="match status" value="1"/>
</dbReference>
<dbReference type="InterPro" id="IPR028877">
    <property type="entry name" value="Ribosomal_eL20"/>
</dbReference>
<dbReference type="InterPro" id="IPR023573">
    <property type="entry name" value="Ribosomal_eL20_dom"/>
</dbReference>
<dbReference type="InterPro" id="IPR021138">
    <property type="entry name" value="Ribosomal_eL20_eukaryotes"/>
</dbReference>
<dbReference type="PANTHER" id="PTHR10052">
    <property type="entry name" value="60S RIBOSOMAL PROTEIN L18A"/>
    <property type="match status" value="1"/>
</dbReference>
<dbReference type="Pfam" id="PF01775">
    <property type="entry name" value="Ribosomal_L18A"/>
    <property type="match status" value="1"/>
</dbReference>
<dbReference type="PIRSF" id="PIRSF002190">
    <property type="entry name" value="Ribosomal_L18a"/>
    <property type="match status" value="1"/>
</dbReference>
<dbReference type="SUPFAM" id="SSF160374">
    <property type="entry name" value="RplX-like"/>
    <property type="match status" value="1"/>
</dbReference>
<reference key="1">
    <citation type="journal article" date="1994" name="Biochim. Biophys. Acta">
        <title>Drosophila ribosomal protein L18a: cDNA sequence, expression and chromosomal localization of the gene.</title>
        <authorList>
            <person name="Ntwasa M."/>
            <person name="Buchanan S.G.S.C."/>
            <person name="Gay N.J."/>
        </authorList>
    </citation>
    <scope>NUCLEOTIDE SEQUENCE [MRNA]</scope>
</reference>
<reference key="2">
    <citation type="journal article" date="2000" name="Science">
        <title>The genome sequence of Drosophila melanogaster.</title>
        <authorList>
            <person name="Adams M.D."/>
            <person name="Celniker S.E."/>
            <person name="Holt R.A."/>
            <person name="Evans C.A."/>
            <person name="Gocayne J.D."/>
            <person name="Amanatides P.G."/>
            <person name="Scherer S.E."/>
            <person name="Li P.W."/>
            <person name="Hoskins R.A."/>
            <person name="Galle R.F."/>
            <person name="George R.A."/>
            <person name="Lewis S.E."/>
            <person name="Richards S."/>
            <person name="Ashburner M."/>
            <person name="Henderson S.N."/>
            <person name="Sutton G.G."/>
            <person name="Wortman J.R."/>
            <person name="Yandell M.D."/>
            <person name="Zhang Q."/>
            <person name="Chen L.X."/>
            <person name="Brandon R.C."/>
            <person name="Rogers Y.-H.C."/>
            <person name="Blazej R.G."/>
            <person name="Champe M."/>
            <person name="Pfeiffer B.D."/>
            <person name="Wan K.H."/>
            <person name="Doyle C."/>
            <person name="Baxter E.G."/>
            <person name="Helt G."/>
            <person name="Nelson C.R."/>
            <person name="Miklos G.L.G."/>
            <person name="Abril J.F."/>
            <person name="Agbayani A."/>
            <person name="An H.-J."/>
            <person name="Andrews-Pfannkoch C."/>
            <person name="Baldwin D."/>
            <person name="Ballew R.M."/>
            <person name="Basu A."/>
            <person name="Baxendale J."/>
            <person name="Bayraktaroglu L."/>
            <person name="Beasley E.M."/>
            <person name="Beeson K.Y."/>
            <person name="Benos P.V."/>
            <person name="Berman B.P."/>
            <person name="Bhandari D."/>
            <person name="Bolshakov S."/>
            <person name="Borkova D."/>
            <person name="Botchan M.R."/>
            <person name="Bouck J."/>
            <person name="Brokstein P."/>
            <person name="Brottier P."/>
            <person name="Burtis K.C."/>
            <person name="Busam D.A."/>
            <person name="Butler H."/>
            <person name="Cadieu E."/>
            <person name="Center A."/>
            <person name="Chandra I."/>
            <person name="Cherry J.M."/>
            <person name="Cawley S."/>
            <person name="Dahlke C."/>
            <person name="Davenport L.B."/>
            <person name="Davies P."/>
            <person name="de Pablos B."/>
            <person name="Delcher A."/>
            <person name="Deng Z."/>
            <person name="Mays A.D."/>
            <person name="Dew I."/>
            <person name="Dietz S.M."/>
            <person name="Dodson K."/>
            <person name="Doup L.E."/>
            <person name="Downes M."/>
            <person name="Dugan-Rocha S."/>
            <person name="Dunkov B.C."/>
            <person name="Dunn P."/>
            <person name="Durbin K.J."/>
            <person name="Evangelista C.C."/>
            <person name="Ferraz C."/>
            <person name="Ferriera S."/>
            <person name="Fleischmann W."/>
            <person name="Fosler C."/>
            <person name="Gabrielian A.E."/>
            <person name="Garg N.S."/>
            <person name="Gelbart W.M."/>
            <person name="Glasser K."/>
            <person name="Glodek A."/>
            <person name="Gong F."/>
            <person name="Gorrell J.H."/>
            <person name="Gu Z."/>
            <person name="Guan P."/>
            <person name="Harris M."/>
            <person name="Harris N.L."/>
            <person name="Harvey D.A."/>
            <person name="Heiman T.J."/>
            <person name="Hernandez J.R."/>
            <person name="Houck J."/>
            <person name="Hostin D."/>
            <person name="Houston K.A."/>
            <person name="Howland T.J."/>
            <person name="Wei M.-H."/>
            <person name="Ibegwam C."/>
            <person name="Jalali M."/>
            <person name="Kalush F."/>
            <person name="Karpen G.H."/>
            <person name="Ke Z."/>
            <person name="Kennison J.A."/>
            <person name="Ketchum K.A."/>
            <person name="Kimmel B.E."/>
            <person name="Kodira C.D."/>
            <person name="Kraft C.L."/>
            <person name="Kravitz S."/>
            <person name="Kulp D."/>
            <person name="Lai Z."/>
            <person name="Lasko P."/>
            <person name="Lei Y."/>
            <person name="Levitsky A.A."/>
            <person name="Li J.H."/>
            <person name="Li Z."/>
            <person name="Liang Y."/>
            <person name="Lin X."/>
            <person name="Liu X."/>
            <person name="Mattei B."/>
            <person name="McIntosh T.C."/>
            <person name="McLeod M.P."/>
            <person name="McPherson D."/>
            <person name="Merkulov G."/>
            <person name="Milshina N.V."/>
            <person name="Mobarry C."/>
            <person name="Morris J."/>
            <person name="Moshrefi A."/>
            <person name="Mount S.M."/>
            <person name="Moy M."/>
            <person name="Murphy B."/>
            <person name="Murphy L."/>
            <person name="Muzny D.M."/>
            <person name="Nelson D.L."/>
            <person name="Nelson D.R."/>
            <person name="Nelson K.A."/>
            <person name="Nixon K."/>
            <person name="Nusskern D.R."/>
            <person name="Pacleb J.M."/>
            <person name="Palazzolo M."/>
            <person name="Pittman G.S."/>
            <person name="Pan S."/>
            <person name="Pollard J."/>
            <person name="Puri V."/>
            <person name="Reese M.G."/>
            <person name="Reinert K."/>
            <person name="Remington K."/>
            <person name="Saunders R.D.C."/>
            <person name="Scheeler F."/>
            <person name="Shen H."/>
            <person name="Shue B.C."/>
            <person name="Siden-Kiamos I."/>
            <person name="Simpson M."/>
            <person name="Skupski M.P."/>
            <person name="Smith T.J."/>
            <person name="Spier E."/>
            <person name="Spradling A.C."/>
            <person name="Stapleton M."/>
            <person name="Strong R."/>
            <person name="Sun E."/>
            <person name="Svirskas R."/>
            <person name="Tector C."/>
            <person name="Turner R."/>
            <person name="Venter E."/>
            <person name="Wang A.H."/>
            <person name="Wang X."/>
            <person name="Wang Z.-Y."/>
            <person name="Wassarman D.A."/>
            <person name="Weinstock G.M."/>
            <person name="Weissenbach J."/>
            <person name="Williams S.M."/>
            <person name="Woodage T."/>
            <person name="Worley K.C."/>
            <person name="Wu D."/>
            <person name="Yang S."/>
            <person name="Yao Q.A."/>
            <person name="Ye J."/>
            <person name="Yeh R.-F."/>
            <person name="Zaveri J.S."/>
            <person name="Zhan M."/>
            <person name="Zhang G."/>
            <person name="Zhao Q."/>
            <person name="Zheng L."/>
            <person name="Zheng X.H."/>
            <person name="Zhong F.N."/>
            <person name="Zhong W."/>
            <person name="Zhou X."/>
            <person name="Zhu S.C."/>
            <person name="Zhu X."/>
            <person name="Smith H.O."/>
            <person name="Gibbs R.A."/>
            <person name="Myers E.W."/>
            <person name="Rubin G.M."/>
            <person name="Venter J.C."/>
        </authorList>
    </citation>
    <scope>NUCLEOTIDE SEQUENCE [LARGE SCALE GENOMIC DNA]</scope>
    <source>
        <strain>Berkeley</strain>
    </source>
</reference>
<reference key="3">
    <citation type="journal article" date="2002" name="Genome Biol.">
        <title>Annotation of the Drosophila melanogaster euchromatic genome: a systematic review.</title>
        <authorList>
            <person name="Misra S."/>
            <person name="Crosby M.A."/>
            <person name="Mungall C.J."/>
            <person name="Matthews B.B."/>
            <person name="Campbell K.S."/>
            <person name="Hradecky P."/>
            <person name="Huang Y."/>
            <person name="Kaminker J.S."/>
            <person name="Millburn G.H."/>
            <person name="Prochnik S.E."/>
            <person name="Smith C.D."/>
            <person name="Tupy J.L."/>
            <person name="Whitfield E.J."/>
            <person name="Bayraktaroglu L."/>
            <person name="Berman B.P."/>
            <person name="Bettencourt B.R."/>
            <person name="Celniker S.E."/>
            <person name="de Grey A.D.N.J."/>
            <person name="Drysdale R.A."/>
            <person name="Harris N.L."/>
            <person name="Richter J."/>
            <person name="Russo S."/>
            <person name="Schroeder A.J."/>
            <person name="Shu S.Q."/>
            <person name="Stapleton M."/>
            <person name="Yamada C."/>
            <person name="Ashburner M."/>
            <person name="Gelbart W.M."/>
            <person name="Rubin G.M."/>
            <person name="Lewis S.E."/>
        </authorList>
    </citation>
    <scope>GENOME REANNOTATION</scope>
    <source>
        <strain>Berkeley</strain>
    </source>
</reference>
<reference key="4">
    <citation type="journal article" date="2002" name="Genome Biol.">
        <title>A Drosophila full-length cDNA resource.</title>
        <authorList>
            <person name="Stapleton M."/>
            <person name="Carlson J.W."/>
            <person name="Brokstein P."/>
            <person name="Yu C."/>
            <person name="Champe M."/>
            <person name="George R.A."/>
            <person name="Guarin H."/>
            <person name="Kronmiller B."/>
            <person name="Pacleb J.M."/>
            <person name="Park S."/>
            <person name="Wan K.H."/>
            <person name="Rubin G.M."/>
            <person name="Celniker S.E."/>
        </authorList>
    </citation>
    <scope>NUCLEOTIDE SEQUENCE [LARGE SCALE MRNA]</scope>
    <source>
        <strain>Berkeley</strain>
        <tissue>Embryo</tissue>
    </source>
</reference>
<reference key="5">
    <citation type="journal article" date="2013" name="Nature">
        <title>Structures of the human and Drosophila 80S ribosome.</title>
        <authorList>
            <person name="Anger A.M."/>
            <person name="Armache J.P."/>
            <person name="Berninghausen O."/>
            <person name="Habeck M."/>
            <person name="Subklewe M."/>
            <person name="Wilson D.N."/>
            <person name="Beckmann R."/>
        </authorList>
    </citation>
    <scope>STRUCTURE BY ELECTRON MICROSCOPY (6.0 ANGSTROMS) OF THE 80S RIBOSOME</scope>
</reference>
<protein>
    <recommendedName>
        <fullName evidence="1">Large ribosomal subunit protein eL20</fullName>
    </recommendedName>
    <alternativeName>
        <fullName>60S ribosomal protein L18a</fullName>
    </alternativeName>
</protein>
<sequence length="177" mass="21030">MRAKGLLKEYEVVGRKLPSEKEPQTPLYKMRIFAPDNIVAKSRFWYFLRQLKKFKKTTGEIVSIKQVYETSPVKIKNFGIWLRYDSRSGTHNMYREYRDLTVGGAVTQCYRDMGARHRARAHSIQIIKVDSIPAAKTRRVHVKQFHDSKIKFPLVQRVHHKGNRKLFSFRKPRTYFQ</sequence>
<proteinExistence type="evidence at protein level"/>
<organism>
    <name type="scientific">Drosophila melanogaster</name>
    <name type="common">Fruit fly</name>
    <dbReference type="NCBI Taxonomy" id="7227"/>
    <lineage>
        <taxon>Eukaryota</taxon>
        <taxon>Metazoa</taxon>
        <taxon>Ecdysozoa</taxon>
        <taxon>Arthropoda</taxon>
        <taxon>Hexapoda</taxon>
        <taxon>Insecta</taxon>
        <taxon>Pterygota</taxon>
        <taxon>Neoptera</taxon>
        <taxon>Endopterygota</taxon>
        <taxon>Diptera</taxon>
        <taxon>Brachycera</taxon>
        <taxon>Muscomorpha</taxon>
        <taxon>Ephydroidea</taxon>
        <taxon>Drosophilidae</taxon>
        <taxon>Drosophila</taxon>
        <taxon>Sophophora</taxon>
    </lineage>
</organism>
<keyword id="KW-0002">3D-structure</keyword>
<keyword id="KW-1185">Reference proteome</keyword>
<keyword id="KW-0687">Ribonucleoprotein</keyword>
<keyword id="KW-0689">Ribosomal protein</keyword>